<organism evidence="10">
    <name type="scientific">Arabidopsis thaliana</name>
    <name type="common">Mouse-ear cress</name>
    <dbReference type="NCBI Taxonomy" id="3702"/>
    <lineage>
        <taxon>Eukaryota</taxon>
        <taxon>Viridiplantae</taxon>
        <taxon>Streptophyta</taxon>
        <taxon>Embryophyta</taxon>
        <taxon>Tracheophyta</taxon>
        <taxon>Spermatophyta</taxon>
        <taxon>Magnoliopsida</taxon>
        <taxon>eudicotyledons</taxon>
        <taxon>Gunneridae</taxon>
        <taxon>Pentapetalae</taxon>
        <taxon>rosids</taxon>
        <taxon>malvids</taxon>
        <taxon>Brassicales</taxon>
        <taxon>Brassicaceae</taxon>
        <taxon>Camelineae</taxon>
        <taxon>Arabidopsis</taxon>
    </lineage>
</organism>
<evidence type="ECO:0000255" key="1">
    <source>
        <dbReference type="PROSITE-ProRule" id="PRU00507"/>
    </source>
</evidence>
<evidence type="ECO:0000255" key="2">
    <source>
        <dbReference type="RuleBase" id="RU361272"/>
    </source>
</evidence>
<evidence type="ECO:0000256" key="3">
    <source>
        <dbReference type="SAM" id="MobiDB-lite"/>
    </source>
</evidence>
<evidence type="ECO:0000269" key="4">
    <source>
    </source>
</evidence>
<evidence type="ECO:0000303" key="5">
    <source>
    </source>
</evidence>
<evidence type="ECO:0000305" key="6"/>
<evidence type="ECO:0000305" key="7">
    <source>
    </source>
</evidence>
<evidence type="ECO:0000312" key="8">
    <source>
        <dbReference type="Araport" id="AT1G17880"/>
    </source>
</evidence>
<evidence type="ECO:0000312" key="9">
    <source>
        <dbReference type="EMBL" id="AAF97268.1"/>
    </source>
</evidence>
<evidence type="ECO:0000312" key="10">
    <source>
        <dbReference type="EMBL" id="CAB56149.1"/>
    </source>
</evidence>
<dbReference type="EMBL" id="AJ242970">
    <property type="protein sequence ID" value="CAB56149.1"/>
    <property type="molecule type" value="mRNA"/>
</dbReference>
<dbReference type="EMBL" id="AC034106">
    <property type="protein sequence ID" value="AAF97268.1"/>
    <property type="molecule type" value="Genomic_DNA"/>
</dbReference>
<dbReference type="EMBL" id="CP002684">
    <property type="protein sequence ID" value="AEE29647.1"/>
    <property type="molecule type" value="Genomic_DNA"/>
</dbReference>
<dbReference type="EMBL" id="AF332407">
    <property type="protein sequence ID" value="AAG48770.1"/>
    <property type="molecule type" value="mRNA"/>
</dbReference>
<dbReference type="EMBL" id="AY045793">
    <property type="protein sequence ID" value="AAK76467.1"/>
    <property type="molecule type" value="mRNA"/>
</dbReference>
<dbReference type="EMBL" id="AY057667">
    <property type="protein sequence ID" value="AAL15298.1"/>
    <property type="molecule type" value="mRNA"/>
</dbReference>
<dbReference type="EMBL" id="AY079361">
    <property type="protein sequence ID" value="AAL85092.1"/>
    <property type="molecule type" value="mRNA"/>
</dbReference>
<dbReference type="EMBL" id="AY084522">
    <property type="protein sequence ID" value="AAM61090.1"/>
    <property type="molecule type" value="mRNA"/>
</dbReference>
<dbReference type="PIR" id="A86314">
    <property type="entry name" value="A86314"/>
</dbReference>
<dbReference type="RefSeq" id="NP_173230.1">
    <property type="nucleotide sequence ID" value="NM_101651.4"/>
</dbReference>
<dbReference type="SMR" id="Q9SMW7"/>
<dbReference type="FunCoup" id="Q9SMW7">
    <property type="interactions" value="4193"/>
</dbReference>
<dbReference type="IntAct" id="Q9SMW7">
    <property type="interactions" value="3"/>
</dbReference>
<dbReference type="STRING" id="3702.Q9SMW7"/>
<dbReference type="iPTMnet" id="Q9SMW7"/>
<dbReference type="MetOSite" id="Q9SMW7"/>
<dbReference type="PaxDb" id="3702-AT1G17880.1"/>
<dbReference type="ProteomicsDB" id="240293"/>
<dbReference type="EnsemblPlants" id="AT1G17880.1">
    <property type="protein sequence ID" value="AT1G17880.1"/>
    <property type="gene ID" value="AT1G17880"/>
</dbReference>
<dbReference type="GeneID" id="838367"/>
<dbReference type="Gramene" id="AT1G17880.1">
    <property type="protein sequence ID" value="AT1G17880.1"/>
    <property type="gene ID" value="AT1G17880"/>
</dbReference>
<dbReference type="KEGG" id="ath:AT1G17880"/>
<dbReference type="Araport" id="AT1G17880"/>
<dbReference type="TAIR" id="AT1G17880">
    <property type="gene designation" value="BTF3"/>
</dbReference>
<dbReference type="eggNOG" id="KOG2240">
    <property type="taxonomic scope" value="Eukaryota"/>
</dbReference>
<dbReference type="HOGENOM" id="CLU_098726_0_0_1"/>
<dbReference type="InParanoid" id="Q9SMW7"/>
<dbReference type="OMA" id="ISGIEEX"/>
<dbReference type="PhylomeDB" id="Q9SMW7"/>
<dbReference type="CD-CODE" id="4299E36E">
    <property type="entry name" value="Nucleolus"/>
</dbReference>
<dbReference type="PRO" id="PR:Q9SMW7"/>
<dbReference type="Proteomes" id="UP000006548">
    <property type="component" value="Chromosome 1"/>
</dbReference>
<dbReference type="ExpressionAtlas" id="Q9SMW7">
    <property type="expression patterns" value="baseline and differential"/>
</dbReference>
<dbReference type="GO" id="GO:0005634">
    <property type="term" value="C:nucleus"/>
    <property type="evidence" value="ECO:0007005"/>
    <property type="project" value="TAIR"/>
</dbReference>
<dbReference type="GO" id="GO:0003729">
    <property type="term" value="F:mRNA binding"/>
    <property type="evidence" value="ECO:0000314"/>
    <property type="project" value="TAIR"/>
</dbReference>
<dbReference type="CDD" id="cd22055">
    <property type="entry name" value="NAC_BTF3"/>
    <property type="match status" value="1"/>
</dbReference>
<dbReference type="FunFam" id="2.20.70.30:FF:000001">
    <property type="entry name" value="Transcription factor BTF3 homolog"/>
    <property type="match status" value="1"/>
</dbReference>
<dbReference type="Gene3D" id="2.20.70.30">
    <property type="entry name" value="Nascent polypeptide-associated complex domain"/>
    <property type="match status" value="1"/>
</dbReference>
<dbReference type="InterPro" id="IPR039370">
    <property type="entry name" value="BTF3"/>
</dbReference>
<dbReference type="InterPro" id="IPR038187">
    <property type="entry name" value="NAC_A/B_dom_sf"/>
</dbReference>
<dbReference type="InterPro" id="IPR002715">
    <property type="entry name" value="Nas_poly-pep-assoc_cplx_dom"/>
</dbReference>
<dbReference type="PANTHER" id="PTHR10351">
    <property type="entry name" value="TRANSCRIPTION FACTOR BTF3 FAMILY MEMBER"/>
    <property type="match status" value="1"/>
</dbReference>
<dbReference type="Pfam" id="PF01849">
    <property type="entry name" value="NAC"/>
    <property type="match status" value="1"/>
</dbReference>
<dbReference type="SMART" id="SM01407">
    <property type="entry name" value="NAC"/>
    <property type="match status" value="1"/>
</dbReference>
<dbReference type="PROSITE" id="PS51151">
    <property type="entry name" value="NAC_AB"/>
    <property type="match status" value="1"/>
</dbReference>
<comment type="subunit">
    <text evidence="4 7">Part of the nascent polypeptide-associated complex (NAC). Interacts with EIF(ISO)4E (PubMed:15716105, PubMed:2320128).</text>
</comment>
<comment type="interaction">
    <interactant intactId="EBI-1770592">
        <id>Q9SMW7</id>
    </interactant>
    <interactant intactId="EBI-1770425">
        <id>O04663</id>
        <label>EIF(ISO)4E</label>
    </interactant>
    <organismsDiffer>false</organismsDiffer>
    <experiments>2</experiments>
</comment>
<comment type="similarity">
    <text evidence="6">Belongs to the NAC-beta family.</text>
</comment>
<name>BTF3_ARATH</name>
<proteinExistence type="evidence at protein level"/>
<feature type="chain" id="PRO_0000435658" description="Basic transcription factor 3">
    <location>
        <begin position="1"/>
        <end position="165"/>
    </location>
</feature>
<feature type="domain" description="NAC-A/B" evidence="1">
    <location>
        <begin position="33"/>
        <end position="97"/>
    </location>
</feature>
<feature type="region of interest" description="Disordered" evidence="3">
    <location>
        <begin position="120"/>
        <end position="144"/>
    </location>
</feature>
<feature type="compositionally biased region" description="Polar residues" evidence="3">
    <location>
        <begin position="120"/>
        <end position="134"/>
    </location>
</feature>
<feature type="sequence conflict" description="In Ref. 4; AAL15298." evidence="6" ref="4">
    <original>A</original>
    <variation>P</variation>
    <location>
        <position position="53"/>
    </location>
</feature>
<reference key="1">
    <citation type="journal article" date="1990" name="Nature">
        <title>Sequencing and expression of complementary DNA for the general transcription factor BTF3.</title>
        <authorList>
            <person name="Zheng X.M."/>
            <person name="Black D."/>
            <person name="Chambon P."/>
            <person name="Egly J.-M."/>
        </authorList>
    </citation>
    <scope>NUCLEOTIDE SEQUENCE [MRNA]</scope>
</reference>
<reference key="2">
    <citation type="journal article" date="2000" name="Nature">
        <title>Sequence and analysis of chromosome 1 of the plant Arabidopsis thaliana.</title>
        <authorList>
            <person name="Theologis A."/>
            <person name="Ecker J.R."/>
            <person name="Palm C.J."/>
            <person name="Federspiel N.A."/>
            <person name="Kaul S."/>
            <person name="White O."/>
            <person name="Alonso J."/>
            <person name="Altafi H."/>
            <person name="Araujo R."/>
            <person name="Bowman C.L."/>
            <person name="Brooks S.Y."/>
            <person name="Buehler E."/>
            <person name="Chan A."/>
            <person name="Chao Q."/>
            <person name="Chen H."/>
            <person name="Cheuk R.F."/>
            <person name="Chin C.W."/>
            <person name="Chung M.K."/>
            <person name="Conn L."/>
            <person name="Conway A.B."/>
            <person name="Conway A.R."/>
            <person name="Creasy T.H."/>
            <person name="Dewar K."/>
            <person name="Dunn P."/>
            <person name="Etgu P."/>
            <person name="Feldblyum T.V."/>
            <person name="Feng J.-D."/>
            <person name="Fong B."/>
            <person name="Fujii C.Y."/>
            <person name="Gill J.E."/>
            <person name="Goldsmith A.D."/>
            <person name="Haas B."/>
            <person name="Hansen N.F."/>
            <person name="Hughes B."/>
            <person name="Huizar L."/>
            <person name="Hunter J.L."/>
            <person name="Jenkins J."/>
            <person name="Johnson-Hopson C."/>
            <person name="Khan S."/>
            <person name="Khaykin E."/>
            <person name="Kim C.J."/>
            <person name="Koo H.L."/>
            <person name="Kremenetskaia I."/>
            <person name="Kurtz D.B."/>
            <person name="Kwan A."/>
            <person name="Lam B."/>
            <person name="Langin-Hooper S."/>
            <person name="Lee A."/>
            <person name="Lee J.M."/>
            <person name="Lenz C.A."/>
            <person name="Li J.H."/>
            <person name="Li Y.-P."/>
            <person name="Lin X."/>
            <person name="Liu S.X."/>
            <person name="Liu Z.A."/>
            <person name="Luros J.S."/>
            <person name="Maiti R."/>
            <person name="Marziali A."/>
            <person name="Militscher J."/>
            <person name="Miranda M."/>
            <person name="Nguyen M."/>
            <person name="Nierman W.C."/>
            <person name="Osborne B.I."/>
            <person name="Pai G."/>
            <person name="Peterson J."/>
            <person name="Pham P.K."/>
            <person name="Rizzo M."/>
            <person name="Rooney T."/>
            <person name="Rowley D."/>
            <person name="Sakano H."/>
            <person name="Salzberg S.L."/>
            <person name="Schwartz J.R."/>
            <person name="Shinn P."/>
            <person name="Southwick A.M."/>
            <person name="Sun H."/>
            <person name="Tallon L.J."/>
            <person name="Tambunga G."/>
            <person name="Toriumi M.J."/>
            <person name="Town C.D."/>
            <person name="Utterback T."/>
            <person name="Van Aken S."/>
            <person name="Vaysberg M."/>
            <person name="Vysotskaia V.S."/>
            <person name="Walker M."/>
            <person name="Wu D."/>
            <person name="Yu G."/>
            <person name="Fraser C.M."/>
            <person name="Venter J.C."/>
            <person name="Davis R.W."/>
        </authorList>
    </citation>
    <scope>NUCLEOTIDE SEQUENCE [LARGE SCALE GENOMIC DNA]</scope>
    <source>
        <strain>cv. Columbia</strain>
    </source>
</reference>
<reference key="3">
    <citation type="journal article" date="2017" name="Plant J.">
        <title>Araport11: a complete reannotation of the Arabidopsis thaliana reference genome.</title>
        <authorList>
            <person name="Cheng C.Y."/>
            <person name="Krishnakumar V."/>
            <person name="Chan A.P."/>
            <person name="Thibaud-Nissen F."/>
            <person name="Schobel S."/>
            <person name="Town C.D."/>
        </authorList>
    </citation>
    <scope>GENOME REANNOTATION</scope>
    <source>
        <strain>cv. Columbia</strain>
    </source>
</reference>
<reference key="4">
    <citation type="journal article" date="2003" name="Science">
        <title>Empirical analysis of transcriptional activity in the Arabidopsis genome.</title>
        <authorList>
            <person name="Yamada K."/>
            <person name="Lim J."/>
            <person name="Dale J.M."/>
            <person name="Chen H."/>
            <person name="Shinn P."/>
            <person name="Palm C.J."/>
            <person name="Southwick A.M."/>
            <person name="Wu H.C."/>
            <person name="Kim C.J."/>
            <person name="Nguyen M."/>
            <person name="Pham P.K."/>
            <person name="Cheuk R.F."/>
            <person name="Karlin-Newmann G."/>
            <person name="Liu S.X."/>
            <person name="Lam B."/>
            <person name="Sakano H."/>
            <person name="Wu T."/>
            <person name="Yu G."/>
            <person name="Miranda M."/>
            <person name="Quach H.L."/>
            <person name="Tripp M."/>
            <person name="Chang C.H."/>
            <person name="Lee J.M."/>
            <person name="Toriumi M.J."/>
            <person name="Chan M.M."/>
            <person name="Tang C.C."/>
            <person name="Onodera C.S."/>
            <person name="Deng J.M."/>
            <person name="Akiyama K."/>
            <person name="Ansari Y."/>
            <person name="Arakawa T."/>
            <person name="Banh J."/>
            <person name="Banno F."/>
            <person name="Bowser L."/>
            <person name="Brooks S.Y."/>
            <person name="Carninci P."/>
            <person name="Chao Q."/>
            <person name="Choy N."/>
            <person name="Enju A."/>
            <person name="Goldsmith A.D."/>
            <person name="Gurjal M."/>
            <person name="Hansen N.F."/>
            <person name="Hayashizaki Y."/>
            <person name="Johnson-Hopson C."/>
            <person name="Hsuan V.W."/>
            <person name="Iida K."/>
            <person name="Karnes M."/>
            <person name="Khan S."/>
            <person name="Koesema E."/>
            <person name="Ishida J."/>
            <person name="Jiang P.X."/>
            <person name="Jones T."/>
            <person name="Kawai J."/>
            <person name="Kamiya A."/>
            <person name="Meyers C."/>
            <person name="Nakajima M."/>
            <person name="Narusaka M."/>
            <person name="Seki M."/>
            <person name="Sakurai T."/>
            <person name="Satou M."/>
            <person name="Tamse R."/>
            <person name="Vaysberg M."/>
            <person name="Wallender E.K."/>
            <person name="Wong C."/>
            <person name="Yamamura Y."/>
            <person name="Yuan S."/>
            <person name="Shinozaki K."/>
            <person name="Davis R.W."/>
            <person name="Theologis A."/>
            <person name="Ecker J.R."/>
        </authorList>
    </citation>
    <scope>NUCLEOTIDE SEQUENCE [LARGE SCALE MRNA]</scope>
    <source>
        <strain>cv. Columbia</strain>
    </source>
</reference>
<reference key="5">
    <citation type="submission" date="2002-03" db="EMBL/GenBank/DDBJ databases">
        <title>Full-length cDNA from Arabidopsis thaliana.</title>
        <authorList>
            <person name="Brover V.V."/>
            <person name="Troukhan M.E."/>
            <person name="Alexandrov N.A."/>
            <person name="Lu Y.-P."/>
            <person name="Flavell R.B."/>
            <person name="Feldmann K.A."/>
        </authorList>
    </citation>
    <scope>NUCLEOTIDE SEQUENCE [LARGE SCALE MRNA]</scope>
</reference>
<reference key="6">
    <citation type="journal article" date="2005" name="Gene">
        <title>Translation initiation factor (iso) 4E interacts with BTF3, the beta subunit of the nascent polypeptide-associated complex.</title>
        <authorList>
            <person name="Freire M.A."/>
        </authorList>
    </citation>
    <scope>INTERACTION WITH EIF(ISO)4E</scope>
</reference>
<sequence>MNREKLMKMANTVRTGGKGTVRRKKKAVHKTNTTDDKRLQSTLKRIGVNSIPAIEEVNIFKDDVVIQFINPKVQASIAANTWVVSGSPQTKKLQDILPQIISQLGPDNMDNLKKLAEQFQKQASGEGNAASATIQEEDDDDVPELVGETFETAAEEKAPAAAASS</sequence>
<keyword id="KW-1185">Reference proteome</keyword>
<keyword id="KW-0804">Transcription</keyword>
<keyword id="KW-0805">Transcription regulation</keyword>
<gene>
    <name evidence="5" type="primary">BTF3</name>
    <name evidence="8" type="ordered locus">At1g17880</name>
    <name evidence="9" type="ORF">F2H15.11</name>
</gene>
<accession>Q9SMW7</accession>
<accession>Q93ZB5</accession>
<protein>
    <recommendedName>
        <fullName evidence="5">Basic transcription factor 3</fullName>
        <shortName evidence="5">AtBTF3</shortName>
    </recommendedName>
    <alternativeName>
        <fullName evidence="2">Nascent polypeptide-associated complex subunit beta</fullName>
    </alternativeName>
</protein>